<dbReference type="EMBL" id="CP000423">
    <property type="protein sequence ID" value="ABJ71229.1"/>
    <property type="molecule type" value="Genomic_DNA"/>
</dbReference>
<dbReference type="RefSeq" id="WP_003567546.1">
    <property type="nucleotide sequence ID" value="NC_008526.1"/>
</dbReference>
<dbReference type="RefSeq" id="YP_807671.1">
    <property type="nucleotide sequence ID" value="NC_008526.1"/>
</dbReference>
<dbReference type="SMR" id="Q034Z3"/>
<dbReference type="STRING" id="321967.LSEI_2493"/>
<dbReference type="PaxDb" id="321967-LSEI_2493"/>
<dbReference type="GeneID" id="69830167"/>
<dbReference type="KEGG" id="lca:LSEI_2493"/>
<dbReference type="PATRIC" id="fig|321967.11.peg.2447"/>
<dbReference type="HOGENOM" id="CLU_095071_2_1_9"/>
<dbReference type="PRO" id="PR:Q034Z3"/>
<dbReference type="Proteomes" id="UP000001651">
    <property type="component" value="Chromosome"/>
</dbReference>
<dbReference type="GO" id="GO:0022625">
    <property type="term" value="C:cytosolic large ribosomal subunit"/>
    <property type="evidence" value="ECO:0007669"/>
    <property type="project" value="TreeGrafter"/>
</dbReference>
<dbReference type="GO" id="GO:0070180">
    <property type="term" value="F:large ribosomal subunit rRNA binding"/>
    <property type="evidence" value="ECO:0007669"/>
    <property type="project" value="TreeGrafter"/>
</dbReference>
<dbReference type="GO" id="GO:0003735">
    <property type="term" value="F:structural constituent of ribosome"/>
    <property type="evidence" value="ECO:0007669"/>
    <property type="project" value="InterPro"/>
</dbReference>
<dbReference type="GO" id="GO:0006412">
    <property type="term" value="P:translation"/>
    <property type="evidence" value="ECO:0007669"/>
    <property type="project" value="UniProtKB-UniRule"/>
</dbReference>
<dbReference type="CDD" id="cd00337">
    <property type="entry name" value="Ribosomal_uL14"/>
    <property type="match status" value="1"/>
</dbReference>
<dbReference type="FunFam" id="2.40.150.20:FF:000001">
    <property type="entry name" value="50S ribosomal protein L14"/>
    <property type="match status" value="1"/>
</dbReference>
<dbReference type="Gene3D" id="2.40.150.20">
    <property type="entry name" value="Ribosomal protein L14"/>
    <property type="match status" value="1"/>
</dbReference>
<dbReference type="HAMAP" id="MF_01367">
    <property type="entry name" value="Ribosomal_uL14"/>
    <property type="match status" value="1"/>
</dbReference>
<dbReference type="InterPro" id="IPR000218">
    <property type="entry name" value="Ribosomal_uL14"/>
</dbReference>
<dbReference type="InterPro" id="IPR005745">
    <property type="entry name" value="Ribosomal_uL14_bac-type"/>
</dbReference>
<dbReference type="InterPro" id="IPR019972">
    <property type="entry name" value="Ribosomal_uL14_CS"/>
</dbReference>
<dbReference type="InterPro" id="IPR036853">
    <property type="entry name" value="Ribosomal_uL14_sf"/>
</dbReference>
<dbReference type="NCBIfam" id="TIGR01067">
    <property type="entry name" value="rplN_bact"/>
    <property type="match status" value="1"/>
</dbReference>
<dbReference type="PANTHER" id="PTHR11761">
    <property type="entry name" value="50S/60S RIBOSOMAL PROTEIN L14/L23"/>
    <property type="match status" value="1"/>
</dbReference>
<dbReference type="PANTHER" id="PTHR11761:SF3">
    <property type="entry name" value="LARGE RIBOSOMAL SUBUNIT PROTEIN UL14M"/>
    <property type="match status" value="1"/>
</dbReference>
<dbReference type="Pfam" id="PF00238">
    <property type="entry name" value="Ribosomal_L14"/>
    <property type="match status" value="1"/>
</dbReference>
<dbReference type="SMART" id="SM01374">
    <property type="entry name" value="Ribosomal_L14"/>
    <property type="match status" value="1"/>
</dbReference>
<dbReference type="SUPFAM" id="SSF50193">
    <property type="entry name" value="Ribosomal protein L14"/>
    <property type="match status" value="1"/>
</dbReference>
<dbReference type="PROSITE" id="PS00049">
    <property type="entry name" value="RIBOSOMAL_L14"/>
    <property type="match status" value="1"/>
</dbReference>
<evidence type="ECO:0000255" key="1">
    <source>
        <dbReference type="HAMAP-Rule" id="MF_01367"/>
    </source>
</evidence>
<evidence type="ECO:0000305" key="2"/>
<name>RL14_LACP3</name>
<proteinExistence type="inferred from homology"/>
<sequence>MIQQESRLKVADNSGAREILVIKVLGGSYRKTGNIGDVVVATVKQATPGGVVKKADVVKAVIVRTKSGARRADGSYIKFDENAAVIINADKSPRGTRIFGPVARELRDGDFMKIVSLAPEVL</sequence>
<accession>Q034Z3</accession>
<reference key="1">
    <citation type="journal article" date="2006" name="Proc. Natl. Acad. Sci. U.S.A.">
        <title>Comparative genomics of the lactic acid bacteria.</title>
        <authorList>
            <person name="Makarova K.S."/>
            <person name="Slesarev A."/>
            <person name="Wolf Y.I."/>
            <person name="Sorokin A."/>
            <person name="Mirkin B."/>
            <person name="Koonin E.V."/>
            <person name="Pavlov A."/>
            <person name="Pavlova N."/>
            <person name="Karamychev V."/>
            <person name="Polouchine N."/>
            <person name="Shakhova V."/>
            <person name="Grigoriev I."/>
            <person name="Lou Y."/>
            <person name="Rohksar D."/>
            <person name="Lucas S."/>
            <person name="Huang K."/>
            <person name="Goodstein D.M."/>
            <person name="Hawkins T."/>
            <person name="Plengvidhya V."/>
            <person name="Welker D."/>
            <person name="Hughes J."/>
            <person name="Goh Y."/>
            <person name="Benson A."/>
            <person name="Baldwin K."/>
            <person name="Lee J.-H."/>
            <person name="Diaz-Muniz I."/>
            <person name="Dosti B."/>
            <person name="Smeianov V."/>
            <person name="Wechter W."/>
            <person name="Barabote R."/>
            <person name="Lorca G."/>
            <person name="Altermann E."/>
            <person name="Barrangou R."/>
            <person name="Ganesan B."/>
            <person name="Xie Y."/>
            <person name="Rawsthorne H."/>
            <person name="Tamir D."/>
            <person name="Parker C."/>
            <person name="Breidt F."/>
            <person name="Broadbent J.R."/>
            <person name="Hutkins R."/>
            <person name="O'Sullivan D."/>
            <person name="Steele J."/>
            <person name="Unlu G."/>
            <person name="Saier M.H. Jr."/>
            <person name="Klaenhammer T."/>
            <person name="Richardson P."/>
            <person name="Kozyavkin S."/>
            <person name="Weimer B.C."/>
            <person name="Mills D.A."/>
        </authorList>
    </citation>
    <scope>NUCLEOTIDE SEQUENCE [LARGE SCALE GENOMIC DNA]</scope>
    <source>
        <strain>ATCC 334 / BCRC 17002 / CCUG 31169 / CIP 107868 / KCTC 3260 / NRRL B-441</strain>
    </source>
</reference>
<protein>
    <recommendedName>
        <fullName evidence="1">Large ribosomal subunit protein uL14</fullName>
    </recommendedName>
    <alternativeName>
        <fullName evidence="2">50S ribosomal protein L14</fullName>
    </alternativeName>
</protein>
<keyword id="KW-1185">Reference proteome</keyword>
<keyword id="KW-0687">Ribonucleoprotein</keyword>
<keyword id="KW-0689">Ribosomal protein</keyword>
<keyword id="KW-0694">RNA-binding</keyword>
<keyword id="KW-0699">rRNA-binding</keyword>
<feature type="chain" id="PRO_1000055603" description="Large ribosomal subunit protein uL14">
    <location>
        <begin position="1"/>
        <end position="122"/>
    </location>
</feature>
<gene>
    <name evidence="1" type="primary">rplN</name>
    <name type="ordered locus">LSEI_2493</name>
</gene>
<organism>
    <name type="scientific">Lacticaseibacillus paracasei (strain ATCC 334 / BCRC 17002 / CCUG 31169 / CIP 107868 / KCTC 3260 / NRRL B-441)</name>
    <name type="common">Lactobacillus paracasei</name>
    <dbReference type="NCBI Taxonomy" id="321967"/>
    <lineage>
        <taxon>Bacteria</taxon>
        <taxon>Bacillati</taxon>
        <taxon>Bacillota</taxon>
        <taxon>Bacilli</taxon>
        <taxon>Lactobacillales</taxon>
        <taxon>Lactobacillaceae</taxon>
        <taxon>Lacticaseibacillus</taxon>
    </lineage>
</organism>
<comment type="function">
    <text evidence="1">Binds to 23S rRNA. Forms part of two intersubunit bridges in the 70S ribosome.</text>
</comment>
<comment type="subunit">
    <text evidence="1">Part of the 50S ribosomal subunit. Forms a cluster with proteins L3 and L19. In the 70S ribosome, L14 and L19 interact and together make contacts with the 16S rRNA in bridges B5 and B8.</text>
</comment>
<comment type="similarity">
    <text evidence="1">Belongs to the universal ribosomal protein uL14 family.</text>
</comment>